<proteinExistence type="inferred from homology"/>
<organism>
    <name type="scientific">Ralstonia nicotianae (strain ATCC BAA-1114 / GMI1000)</name>
    <name type="common">Ralstonia solanacearum</name>
    <dbReference type="NCBI Taxonomy" id="267608"/>
    <lineage>
        <taxon>Bacteria</taxon>
        <taxon>Pseudomonadati</taxon>
        <taxon>Pseudomonadota</taxon>
        <taxon>Betaproteobacteria</taxon>
        <taxon>Burkholderiales</taxon>
        <taxon>Burkholderiaceae</taxon>
        <taxon>Ralstonia</taxon>
        <taxon>Ralstonia solanacearum species complex</taxon>
    </lineage>
</organism>
<feature type="chain" id="PRO_0000234176" description="Urease subunit alpha">
    <location>
        <begin position="1"/>
        <end position="572"/>
    </location>
</feature>
<feature type="domain" description="Urease" evidence="1">
    <location>
        <begin position="130"/>
        <end position="572"/>
    </location>
</feature>
<feature type="active site" description="Proton donor" evidence="1">
    <location>
        <position position="321"/>
    </location>
</feature>
<feature type="binding site" evidence="1">
    <location>
        <position position="135"/>
    </location>
    <ligand>
        <name>Ni(2+)</name>
        <dbReference type="ChEBI" id="CHEBI:49786"/>
        <label>1</label>
    </ligand>
</feature>
<feature type="binding site" evidence="1">
    <location>
        <position position="137"/>
    </location>
    <ligand>
        <name>Ni(2+)</name>
        <dbReference type="ChEBI" id="CHEBI:49786"/>
        <label>1</label>
    </ligand>
</feature>
<feature type="binding site" description="via carbamate group" evidence="1">
    <location>
        <position position="218"/>
    </location>
    <ligand>
        <name>Ni(2+)</name>
        <dbReference type="ChEBI" id="CHEBI:49786"/>
        <label>1</label>
    </ligand>
</feature>
<feature type="binding site" description="via carbamate group" evidence="1">
    <location>
        <position position="218"/>
    </location>
    <ligand>
        <name>Ni(2+)</name>
        <dbReference type="ChEBI" id="CHEBI:49786"/>
        <label>2</label>
    </ligand>
</feature>
<feature type="binding site" evidence="1">
    <location>
        <position position="220"/>
    </location>
    <ligand>
        <name>substrate</name>
    </ligand>
</feature>
<feature type="binding site" evidence="1">
    <location>
        <position position="247"/>
    </location>
    <ligand>
        <name>Ni(2+)</name>
        <dbReference type="ChEBI" id="CHEBI:49786"/>
        <label>2</label>
    </ligand>
</feature>
<feature type="binding site" evidence="1">
    <location>
        <position position="273"/>
    </location>
    <ligand>
        <name>Ni(2+)</name>
        <dbReference type="ChEBI" id="CHEBI:49786"/>
        <label>2</label>
    </ligand>
</feature>
<feature type="binding site" evidence="1">
    <location>
        <position position="361"/>
    </location>
    <ligand>
        <name>Ni(2+)</name>
        <dbReference type="ChEBI" id="CHEBI:49786"/>
        <label>1</label>
    </ligand>
</feature>
<feature type="modified residue" description="N6-carboxylysine" evidence="1">
    <location>
        <position position="218"/>
    </location>
</feature>
<protein>
    <recommendedName>
        <fullName evidence="1">Urease subunit alpha</fullName>
        <ecNumber evidence="1">3.5.1.5</ecNumber>
    </recommendedName>
    <alternativeName>
        <fullName evidence="1">Urea amidohydrolase subunit alpha</fullName>
    </alternativeName>
</protein>
<gene>
    <name evidence="1" type="primary">ureC</name>
    <name type="ordered locus">RSc2032</name>
    <name type="ORF">RS02789</name>
</gene>
<dbReference type="EC" id="3.5.1.5" evidence="1"/>
<dbReference type="EMBL" id="AL646052">
    <property type="protein sequence ID" value="CAD15734.1"/>
    <property type="molecule type" value="Genomic_DNA"/>
</dbReference>
<dbReference type="RefSeq" id="WP_011001967.1">
    <property type="nucleotide sequence ID" value="NC_003295.1"/>
</dbReference>
<dbReference type="SMR" id="Q8XXT1"/>
<dbReference type="STRING" id="267608.RSc2032"/>
<dbReference type="MEROPS" id="M38.982"/>
<dbReference type="EnsemblBacteria" id="CAD15734">
    <property type="protein sequence ID" value="CAD15734"/>
    <property type="gene ID" value="RSc2032"/>
</dbReference>
<dbReference type="KEGG" id="rso:RSc2032"/>
<dbReference type="eggNOG" id="COG0804">
    <property type="taxonomic scope" value="Bacteria"/>
</dbReference>
<dbReference type="HOGENOM" id="CLU_000980_0_0_4"/>
<dbReference type="UniPathway" id="UPA00258">
    <property type="reaction ID" value="UER00370"/>
</dbReference>
<dbReference type="Proteomes" id="UP000001436">
    <property type="component" value="Chromosome"/>
</dbReference>
<dbReference type="GO" id="GO:0005737">
    <property type="term" value="C:cytoplasm"/>
    <property type="evidence" value="ECO:0007669"/>
    <property type="project" value="UniProtKB-SubCell"/>
</dbReference>
<dbReference type="GO" id="GO:0016151">
    <property type="term" value="F:nickel cation binding"/>
    <property type="evidence" value="ECO:0007669"/>
    <property type="project" value="UniProtKB-UniRule"/>
</dbReference>
<dbReference type="GO" id="GO:0009039">
    <property type="term" value="F:urease activity"/>
    <property type="evidence" value="ECO:0007669"/>
    <property type="project" value="UniProtKB-UniRule"/>
</dbReference>
<dbReference type="GO" id="GO:0043419">
    <property type="term" value="P:urea catabolic process"/>
    <property type="evidence" value="ECO:0007669"/>
    <property type="project" value="UniProtKB-UniRule"/>
</dbReference>
<dbReference type="CDD" id="cd00375">
    <property type="entry name" value="Urease_alpha"/>
    <property type="match status" value="1"/>
</dbReference>
<dbReference type="Gene3D" id="3.20.20.140">
    <property type="entry name" value="Metal-dependent hydrolases"/>
    <property type="match status" value="1"/>
</dbReference>
<dbReference type="Gene3D" id="2.30.40.10">
    <property type="entry name" value="Urease, subunit C, domain 1"/>
    <property type="match status" value="1"/>
</dbReference>
<dbReference type="HAMAP" id="MF_01953">
    <property type="entry name" value="Urease_alpha"/>
    <property type="match status" value="1"/>
</dbReference>
<dbReference type="InterPro" id="IPR006680">
    <property type="entry name" value="Amidohydro-rel"/>
</dbReference>
<dbReference type="InterPro" id="IPR011059">
    <property type="entry name" value="Metal-dep_hydrolase_composite"/>
</dbReference>
<dbReference type="InterPro" id="IPR032466">
    <property type="entry name" value="Metal_Hydrolase"/>
</dbReference>
<dbReference type="InterPro" id="IPR011612">
    <property type="entry name" value="Urease_alpha_N_dom"/>
</dbReference>
<dbReference type="InterPro" id="IPR050112">
    <property type="entry name" value="Urease_alpha_subunit"/>
</dbReference>
<dbReference type="InterPro" id="IPR017950">
    <property type="entry name" value="Urease_AS"/>
</dbReference>
<dbReference type="InterPro" id="IPR005848">
    <property type="entry name" value="Urease_asu"/>
</dbReference>
<dbReference type="InterPro" id="IPR017951">
    <property type="entry name" value="Urease_asu_c"/>
</dbReference>
<dbReference type="InterPro" id="IPR029754">
    <property type="entry name" value="Urease_Ni-bd"/>
</dbReference>
<dbReference type="NCBIfam" id="NF009685">
    <property type="entry name" value="PRK13206.1"/>
    <property type="match status" value="1"/>
</dbReference>
<dbReference type="NCBIfam" id="NF009686">
    <property type="entry name" value="PRK13207.1"/>
    <property type="match status" value="1"/>
</dbReference>
<dbReference type="NCBIfam" id="TIGR01792">
    <property type="entry name" value="urease_alph"/>
    <property type="match status" value="1"/>
</dbReference>
<dbReference type="PANTHER" id="PTHR43440">
    <property type="entry name" value="UREASE"/>
    <property type="match status" value="1"/>
</dbReference>
<dbReference type="PANTHER" id="PTHR43440:SF1">
    <property type="entry name" value="UREASE"/>
    <property type="match status" value="1"/>
</dbReference>
<dbReference type="Pfam" id="PF01979">
    <property type="entry name" value="Amidohydro_1"/>
    <property type="match status" value="1"/>
</dbReference>
<dbReference type="Pfam" id="PF00449">
    <property type="entry name" value="Urease_alpha"/>
    <property type="match status" value="1"/>
</dbReference>
<dbReference type="PRINTS" id="PR01752">
    <property type="entry name" value="UREASE"/>
</dbReference>
<dbReference type="SUPFAM" id="SSF51338">
    <property type="entry name" value="Composite domain of metallo-dependent hydrolases"/>
    <property type="match status" value="2"/>
</dbReference>
<dbReference type="SUPFAM" id="SSF51556">
    <property type="entry name" value="Metallo-dependent hydrolases"/>
    <property type="match status" value="1"/>
</dbReference>
<dbReference type="PROSITE" id="PS01120">
    <property type="entry name" value="UREASE_1"/>
    <property type="match status" value="1"/>
</dbReference>
<dbReference type="PROSITE" id="PS00145">
    <property type="entry name" value="UREASE_2"/>
    <property type="match status" value="1"/>
</dbReference>
<dbReference type="PROSITE" id="PS51368">
    <property type="entry name" value="UREASE_3"/>
    <property type="match status" value="1"/>
</dbReference>
<accession>Q8XXT1</accession>
<comment type="catalytic activity">
    <reaction evidence="1">
        <text>urea + 2 H2O + H(+) = hydrogencarbonate + 2 NH4(+)</text>
        <dbReference type="Rhea" id="RHEA:20557"/>
        <dbReference type="ChEBI" id="CHEBI:15377"/>
        <dbReference type="ChEBI" id="CHEBI:15378"/>
        <dbReference type="ChEBI" id="CHEBI:16199"/>
        <dbReference type="ChEBI" id="CHEBI:17544"/>
        <dbReference type="ChEBI" id="CHEBI:28938"/>
        <dbReference type="EC" id="3.5.1.5"/>
    </reaction>
</comment>
<comment type="cofactor">
    <cofactor evidence="1">
        <name>Ni cation</name>
        <dbReference type="ChEBI" id="CHEBI:25516"/>
    </cofactor>
    <text evidence="1">Binds 2 nickel ions per subunit.</text>
</comment>
<comment type="pathway">
    <text evidence="1">Nitrogen metabolism; urea degradation; CO(2) and NH(3) from urea (urease route): step 1/1.</text>
</comment>
<comment type="subunit">
    <text evidence="1">Heterotrimer of UreA (gamma), UreB (beta) and UreC (alpha) subunits. Three heterotrimers associate to form the active enzyme.</text>
</comment>
<comment type="subcellular location">
    <subcellularLocation>
        <location evidence="1">Cytoplasm</location>
    </subcellularLocation>
</comment>
<comment type="PTM">
    <text evidence="1">Carboxylation allows a single lysine to coordinate two nickel ions.</text>
</comment>
<comment type="similarity">
    <text evidence="1">Belongs to the metallo-dependent hydrolases superfamily. Urease alpha subunit family.</text>
</comment>
<sequence>MTLKITRRAYAEMFGPTTGDRVRLADTDLIVEVERDYTIYGEEVKFGGGKVIRDGMGQSQRESKDCADTVITNALIIDHWGIVKADIGLKHGRIAAIGKAGNPDIQPGVTIVIGPGTEIIAGEGMIVTAGGVDTHIHFICPQQIDEALNSGVTTMIGGGTGPATGTYATTCTPGPWHLQRMLQAADAYPMNIGFLGKGNGSLPGALREQIDAGAIGLKLHEDWGSTPAAIDCCLGVADDTDTQVAIHTDTLNESGFVEATIAAFKGRTIHTYHTEGAGGGHAPDIIRVCGESNVLPSSTNPTRPFTVNTLDEHLDMLMVCHHLDASIAEDIAFAESRIRRETIAAEDILHDLGAFSMLSSDSQAMGRVGEVILRTWQTAHKMKAQRGKLAGDPNDARGGHDNFRVKRYVAKYTINPAITHGIAHEVGSIEVGKWADLVLWKPAFFGVKPSLILKGGMIASAAMGDANASIPTPQPVHYRPMFAAAGGALARSSLSFLSQSAAQAGVAERYGLAKTTAVVRGTRAVTKAQMIHNDWQPSITVDPETYQVVADGMLLTCEPAEVLPMAQRYFLF</sequence>
<reference key="1">
    <citation type="journal article" date="2002" name="Nature">
        <title>Genome sequence of the plant pathogen Ralstonia solanacearum.</title>
        <authorList>
            <person name="Salanoubat M."/>
            <person name="Genin S."/>
            <person name="Artiguenave F."/>
            <person name="Gouzy J."/>
            <person name="Mangenot S."/>
            <person name="Arlat M."/>
            <person name="Billault A."/>
            <person name="Brottier P."/>
            <person name="Camus J.-C."/>
            <person name="Cattolico L."/>
            <person name="Chandler M."/>
            <person name="Choisne N."/>
            <person name="Claudel-Renard C."/>
            <person name="Cunnac S."/>
            <person name="Demange N."/>
            <person name="Gaspin C."/>
            <person name="Lavie M."/>
            <person name="Moisan A."/>
            <person name="Robert C."/>
            <person name="Saurin W."/>
            <person name="Schiex T."/>
            <person name="Siguier P."/>
            <person name="Thebault P."/>
            <person name="Whalen M."/>
            <person name="Wincker P."/>
            <person name="Levy M."/>
            <person name="Weissenbach J."/>
            <person name="Boucher C.A."/>
        </authorList>
    </citation>
    <scope>NUCLEOTIDE SEQUENCE [LARGE SCALE GENOMIC DNA]</scope>
    <source>
        <strain>ATCC BAA-1114 / GMI1000</strain>
    </source>
</reference>
<name>URE1_RALN1</name>
<evidence type="ECO:0000255" key="1">
    <source>
        <dbReference type="HAMAP-Rule" id="MF_01953"/>
    </source>
</evidence>
<keyword id="KW-0963">Cytoplasm</keyword>
<keyword id="KW-0378">Hydrolase</keyword>
<keyword id="KW-0479">Metal-binding</keyword>
<keyword id="KW-0533">Nickel</keyword>
<keyword id="KW-1185">Reference proteome</keyword>